<comment type="function">
    <text evidence="1">Interacts with MUS81 to form a DNA structure-specific endonuclease with substrate preference for branched DNA structures with a 5'-end at the branch nick. Typical substrates include 3'-flap structures, D-loops, replication forks and nicked Holliday junctions. May be required in mitosis for the processing of stalled or collapsed replication fork intermediates. May be required in meiosis for the repair of meiosis-specific double strand breaks subsequent to single-end invasion (SEI) (By similarity).</text>
</comment>
<comment type="cofactor">
    <cofactor evidence="1">
        <name>Mg(2+)</name>
        <dbReference type="ChEBI" id="CHEBI:18420"/>
    </cofactor>
</comment>
<comment type="subunit">
    <text evidence="1">Interacts with MUS81.</text>
</comment>
<comment type="subcellular location">
    <subcellularLocation>
        <location evidence="1">Nucleus</location>
    </subcellularLocation>
</comment>
<comment type="similarity">
    <text evidence="3">Belongs to the EME1/MMS4 family.</text>
</comment>
<sequence length="714" mass="79362">MKSIELIDIESIASDRAGITREDGVIELLSEADEALGRRPYPSSPTIRSTEANIDESIGNRQLWLQSIELNGEFQEDDSEEVEETIGKKPDDALVCSDACSAPDVSIQELLQTFTPPKPHAGRVMKAGAGPVRGSSRQTSSKLQTKDVLQDILVELDDNLSSWDTPSTSGIRSPETVATLAAKWANKTEKTSGKPLYGRPRSSGNRGNILLKRTLANRNNILSSELGGESSPSLQALTTPLPAKSNDGDKNQTTNVMTTGGFRLGTMEKQTLNGSACVDRIQQVPVSSPESVSFLEGLSDIPISKPVQLTQRCIAATNTGYTKDNCASTPRSAAAVEYLEPIDTDTSILSTAGEALPHSPVKPSKVSRERSKRDYIVHSKAFTAEESKAKIRQLMSNTALKKQFNEVNKVTREKQSLLAEIVLSINEQVHQYLLEQKVPIAEVLGPTTVIHNFESVPIIRFKRKCTSMYDLNNDIYYPCETTMCNEPICLLFYNAVDFFTKYKNQKQRLYSEVQDLKRAGNKVIIILNEYSRLEKSLAELENRCMRSRVEQQLTGDKSPRRKTVKEVQLTALEMNSKDLGRKVNEMIIKCDIDIFPINSAASFANWISNLVWVVAKMRYDPMMKNVNWSHINVKIGKTPTEVLSKTLQQINGVTEIRAGRVTSTYPSFQQIFTDFEKGYLVAGKDGNPLMTKVAEKAMNALLMSEDPEEQIYIN</sequence>
<dbReference type="EC" id="3.1.22.-"/>
<dbReference type="EMBL" id="AE016817">
    <property type="protein sequence ID" value="AAS51602.2"/>
    <property type="molecule type" value="Genomic_DNA"/>
</dbReference>
<dbReference type="RefSeq" id="NP_983778.2">
    <property type="nucleotide sequence ID" value="NM_209131.2"/>
</dbReference>
<dbReference type="STRING" id="284811.Q75B88"/>
<dbReference type="EnsemblFungi" id="AAS51602">
    <property type="protein sequence ID" value="AAS51602"/>
    <property type="gene ID" value="AGOS_ADL318C"/>
</dbReference>
<dbReference type="GeneID" id="4619913"/>
<dbReference type="KEGG" id="ago:AGOS_ADL318C"/>
<dbReference type="eggNOG" id="ENOG502RY0Q">
    <property type="taxonomic scope" value="Eukaryota"/>
</dbReference>
<dbReference type="HOGENOM" id="CLU_023637_0_0_1"/>
<dbReference type="InParanoid" id="Q75B88"/>
<dbReference type="OMA" id="SINEQVH"/>
<dbReference type="OrthoDB" id="343092at2759"/>
<dbReference type="Proteomes" id="UP000000591">
    <property type="component" value="Chromosome IV"/>
</dbReference>
<dbReference type="GO" id="GO:0048476">
    <property type="term" value="C:Holliday junction resolvase complex"/>
    <property type="evidence" value="ECO:0000318"/>
    <property type="project" value="GO_Central"/>
</dbReference>
<dbReference type="GO" id="GO:0005634">
    <property type="term" value="C:nucleus"/>
    <property type="evidence" value="ECO:0007669"/>
    <property type="project" value="UniProtKB-SubCell"/>
</dbReference>
<dbReference type="GO" id="GO:0003677">
    <property type="term" value="F:DNA binding"/>
    <property type="evidence" value="ECO:0007669"/>
    <property type="project" value="InterPro"/>
</dbReference>
<dbReference type="GO" id="GO:0004519">
    <property type="term" value="F:endonuclease activity"/>
    <property type="evidence" value="ECO:0007669"/>
    <property type="project" value="UniProtKB-KW"/>
</dbReference>
<dbReference type="GO" id="GO:0046872">
    <property type="term" value="F:metal ion binding"/>
    <property type="evidence" value="ECO:0007669"/>
    <property type="project" value="UniProtKB-KW"/>
</dbReference>
<dbReference type="GO" id="GO:0006302">
    <property type="term" value="P:double-strand break repair"/>
    <property type="evidence" value="ECO:0000318"/>
    <property type="project" value="GO_Central"/>
</dbReference>
<dbReference type="GO" id="GO:0031573">
    <property type="term" value="P:mitotic intra-S DNA damage checkpoint signaling"/>
    <property type="evidence" value="ECO:0000318"/>
    <property type="project" value="GO_Central"/>
</dbReference>
<dbReference type="GO" id="GO:0031297">
    <property type="term" value="P:replication fork processing"/>
    <property type="evidence" value="ECO:0000318"/>
    <property type="project" value="GO_Central"/>
</dbReference>
<dbReference type="GO" id="GO:0000712">
    <property type="term" value="P:resolution of meiotic recombination intermediates"/>
    <property type="evidence" value="ECO:0000318"/>
    <property type="project" value="GO_Central"/>
</dbReference>
<dbReference type="CDD" id="cd20085">
    <property type="entry name" value="XPF_nuclease_Mms4"/>
    <property type="match status" value="1"/>
</dbReference>
<dbReference type="InterPro" id="IPR006166">
    <property type="entry name" value="ERCC4_domain"/>
</dbReference>
<dbReference type="InterPro" id="IPR033310">
    <property type="entry name" value="Mms4/EME1/EME2"/>
</dbReference>
<dbReference type="InterPro" id="IPR047521">
    <property type="entry name" value="XPF_nuclease_EME1_ascomycetes"/>
</dbReference>
<dbReference type="PANTHER" id="PTHR21077:SF5">
    <property type="entry name" value="CROSSOVER JUNCTION ENDONUCLEASE MMS4"/>
    <property type="match status" value="1"/>
</dbReference>
<dbReference type="PANTHER" id="PTHR21077">
    <property type="entry name" value="EME1 PROTEIN"/>
    <property type="match status" value="1"/>
</dbReference>
<dbReference type="Pfam" id="PF02732">
    <property type="entry name" value="ERCC4"/>
    <property type="match status" value="1"/>
</dbReference>
<dbReference type="SMART" id="SM00891">
    <property type="entry name" value="ERCC4"/>
    <property type="match status" value="1"/>
</dbReference>
<gene>
    <name type="primary">EME1</name>
    <name type="ordered locus">ADL318C</name>
</gene>
<reference key="1">
    <citation type="journal article" date="2004" name="Science">
        <title>The Ashbya gossypii genome as a tool for mapping the ancient Saccharomyces cerevisiae genome.</title>
        <authorList>
            <person name="Dietrich F.S."/>
            <person name="Voegeli S."/>
            <person name="Brachat S."/>
            <person name="Lerch A."/>
            <person name="Gates K."/>
            <person name="Steiner S."/>
            <person name="Mohr C."/>
            <person name="Poehlmann R."/>
            <person name="Luedi P."/>
            <person name="Choi S."/>
            <person name="Wing R.A."/>
            <person name="Flavier A."/>
            <person name="Gaffney T.D."/>
            <person name="Philippsen P."/>
        </authorList>
    </citation>
    <scope>NUCLEOTIDE SEQUENCE [LARGE SCALE GENOMIC DNA]</scope>
    <source>
        <strain>ATCC 10895 / CBS 109.51 / FGSC 9923 / NRRL Y-1056</strain>
    </source>
</reference>
<reference key="2">
    <citation type="journal article" date="2013" name="G3 (Bethesda)">
        <title>Genomes of Ashbya fungi isolated from insects reveal four mating-type loci, numerous translocations, lack of transposons, and distinct gene duplications.</title>
        <authorList>
            <person name="Dietrich F.S."/>
            <person name="Voegeli S."/>
            <person name="Kuo S."/>
            <person name="Philippsen P."/>
        </authorList>
    </citation>
    <scope>GENOME REANNOTATION</scope>
    <scope>SEQUENCE REVISION TO 359</scope>
    <source>
        <strain>ATCC 10895 / CBS 109.51 / FGSC 9923 / NRRL Y-1056</strain>
    </source>
</reference>
<protein>
    <recommendedName>
        <fullName>Crossover junction endonuclease EME1</fullName>
        <ecNumber>3.1.22.-</ecNumber>
    </recommendedName>
</protein>
<accession>Q75B88</accession>
<keyword id="KW-0227">DNA damage</keyword>
<keyword id="KW-0233">DNA recombination</keyword>
<keyword id="KW-0234">DNA repair</keyword>
<keyword id="KW-0255">Endonuclease</keyword>
<keyword id="KW-0378">Hydrolase</keyword>
<keyword id="KW-0460">Magnesium</keyword>
<keyword id="KW-0469">Meiosis</keyword>
<keyword id="KW-0479">Metal-binding</keyword>
<keyword id="KW-0540">Nuclease</keyword>
<keyword id="KW-0539">Nucleus</keyword>
<keyword id="KW-1185">Reference proteome</keyword>
<evidence type="ECO:0000250" key="1"/>
<evidence type="ECO:0000256" key="2">
    <source>
        <dbReference type="SAM" id="MobiDB-lite"/>
    </source>
</evidence>
<evidence type="ECO:0000305" key="3"/>
<proteinExistence type="inferred from homology"/>
<feature type="chain" id="PRO_0000223633" description="Crossover junction endonuclease EME1">
    <location>
        <begin position="1"/>
        <end position="714"/>
    </location>
</feature>
<feature type="region of interest" description="Disordered" evidence="2">
    <location>
        <begin position="223"/>
        <end position="252"/>
    </location>
</feature>
<feature type="compositionally biased region" description="Low complexity" evidence="2">
    <location>
        <begin position="223"/>
        <end position="234"/>
    </location>
</feature>
<organism>
    <name type="scientific">Eremothecium gossypii (strain ATCC 10895 / CBS 109.51 / FGSC 9923 / NRRL Y-1056)</name>
    <name type="common">Yeast</name>
    <name type="synonym">Ashbya gossypii</name>
    <dbReference type="NCBI Taxonomy" id="284811"/>
    <lineage>
        <taxon>Eukaryota</taxon>
        <taxon>Fungi</taxon>
        <taxon>Dikarya</taxon>
        <taxon>Ascomycota</taxon>
        <taxon>Saccharomycotina</taxon>
        <taxon>Saccharomycetes</taxon>
        <taxon>Saccharomycetales</taxon>
        <taxon>Saccharomycetaceae</taxon>
        <taxon>Eremothecium</taxon>
    </lineage>
</organism>
<name>EME1_EREGS</name>